<reference key="1">
    <citation type="journal article" date="2010" name="J. Bacteriol.">
        <title>Whole genome sequences of two Xylella fastidiosa strains (M12 and M23) causing almond leaf scorch disease in California.</title>
        <authorList>
            <person name="Chen J."/>
            <person name="Xie G."/>
            <person name="Han S."/>
            <person name="Chertkov O."/>
            <person name="Sims D."/>
            <person name="Civerolo E.L."/>
        </authorList>
    </citation>
    <scope>NUCLEOTIDE SEQUENCE [LARGE SCALE GENOMIC DNA]</scope>
    <source>
        <strain>M23</strain>
    </source>
</reference>
<organism>
    <name type="scientific">Xylella fastidiosa (strain M23)</name>
    <dbReference type="NCBI Taxonomy" id="405441"/>
    <lineage>
        <taxon>Bacteria</taxon>
        <taxon>Pseudomonadati</taxon>
        <taxon>Pseudomonadota</taxon>
        <taxon>Gammaproteobacteria</taxon>
        <taxon>Lysobacterales</taxon>
        <taxon>Lysobacteraceae</taxon>
        <taxon>Xylella</taxon>
    </lineage>
</organism>
<name>MTGA_XYLF2</name>
<comment type="function">
    <text evidence="1">Peptidoglycan polymerase that catalyzes glycan chain elongation from lipid-linked precursors.</text>
</comment>
<comment type="catalytic activity">
    <reaction evidence="1">
        <text>[GlcNAc-(1-&gt;4)-Mur2Ac(oyl-L-Ala-gamma-D-Glu-L-Lys-D-Ala-D-Ala)](n)-di-trans,octa-cis-undecaprenyl diphosphate + beta-D-GlcNAc-(1-&gt;4)-Mur2Ac(oyl-L-Ala-gamma-D-Glu-L-Lys-D-Ala-D-Ala)-di-trans,octa-cis-undecaprenyl diphosphate = [GlcNAc-(1-&gt;4)-Mur2Ac(oyl-L-Ala-gamma-D-Glu-L-Lys-D-Ala-D-Ala)](n+1)-di-trans,octa-cis-undecaprenyl diphosphate + di-trans,octa-cis-undecaprenyl diphosphate + H(+)</text>
        <dbReference type="Rhea" id="RHEA:23708"/>
        <dbReference type="Rhea" id="RHEA-COMP:9602"/>
        <dbReference type="Rhea" id="RHEA-COMP:9603"/>
        <dbReference type="ChEBI" id="CHEBI:15378"/>
        <dbReference type="ChEBI" id="CHEBI:58405"/>
        <dbReference type="ChEBI" id="CHEBI:60033"/>
        <dbReference type="ChEBI" id="CHEBI:78435"/>
        <dbReference type="EC" id="2.4.99.28"/>
    </reaction>
</comment>
<comment type="pathway">
    <text evidence="1">Cell wall biogenesis; peptidoglycan biosynthesis.</text>
</comment>
<comment type="subcellular location">
    <subcellularLocation>
        <location evidence="1">Cell inner membrane</location>
        <topology evidence="1">Single-pass membrane protein</topology>
    </subcellularLocation>
</comment>
<comment type="similarity">
    <text evidence="1">Belongs to the glycosyltransferase 51 family.</text>
</comment>
<gene>
    <name evidence="1" type="primary">mtgA</name>
    <name type="ordered locus">XfasM23_1147</name>
</gene>
<sequence>MYQWIQRDSDVHQRWIWCRRLLIVSLVSALMSVLQVIVFRFVDPPLSMTMVGRYLEAWSDRQWNFRLHYVWCDLEQIAPSVPISLVAAEDQRFPFHHGFDFDAIKKALGRHSRGGHLRGASTISQQVAKNLFLWSGRSFVRKGLEGWYTFWIELFWPKRRILEIYANIAEFGDGVYGVQAAARRYLGKGAADLDESDAAQLAAVLPSPRHYNIQHPGPYIRWRSSWIQRQAKQLGGSAYLDMH</sequence>
<protein>
    <recommendedName>
        <fullName evidence="1">Biosynthetic peptidoglycan transglycosylase</fullName>
        <ecNumber evidence="1">2.4.99.28</ecNumber>
    </recommendedName>
    <alternativeName>
        <fullName evidence="1">Glycan polymerase</fullName>
    </alternativeName>
    <alternativeName>
        <fullName evidence="1">Peptidoglycan glycosyltransferase MtgA</fullName>
        <shortName evidence="1">PGT</shortName>
    </alternativeName>
</protein>
<accession>B2I5D0</accession>
<keyword id="KW-0997">Cell inner membrane</keyword>
<keyword id="KW-1003">Cell membrane</keyword>
<keyword id="KW-0133">Cell shape</keyword>
<keyword id="KW-0961">Cell wall biogenesis/degradation</keyword>
<keyword id="KW-0328">Glycosyltransferase</keyword>
<keyword id="KW-0472">Membrane</keyword>
<keyword id="KW-0573">Peptidoglycan synthesis</keyword>
<keyword id="KW-0808">Transferase</keyword>
<keyword id="KW-0812">Transmembrane</keyword>
<keyword id="KW-1133">Transmembrane helix</keyword>
<feature type="chain" id="PRO_1000133613" description="Biosynthetic peptidoglycan transglycosylase">
    <location>
        <begin position="1"/>
        <end position="243"/>
    </location>
</feature>
<feature type="transmembrane region" description="Helical" evidence="1">
    <location>
        <begin position="21"/>
        <end position="43"/>
    </location>
</feature>
<dbReference type="EC" id="2.4.99.28" evidence="1"/>
<dbReference type="EMBL" id="CP001011">
    <property type="protein sequence ID" value="ACB92575.1"/>
    <property type="molecule type" value="Genomic_DNA"/>
</dbReference>
<dbReference type="RefSeq" id="WP_012382616.1">
    <property type="nucleotide sequence ID" value="NC_010577.1"/>
</dbReference>
<dbReference type="SMR" id="B2I5D0"/>
<dbReference type="CAZy" id="GT51">
    <property type="family name" value="Glycosyltransferase Family 51"/>
</dbReference>
<dbReference type="GeneID" id="93904868"/>
<dbReference type="KEGG" id="xfn:XfasM23_1147"/>
<dbReference type="HOGENOM" id="CLU_006354_1_1_6"/>
<dbReference type="UniPathway" id="UPA00219"/>
<dbReference type="Proteomes" id="UP000001698">
    <property type="component" value="Chromosome"/>
</dbReference>
<dbReference type="GO" id="GO:0009274">
    <property type="term" value="C:peptidoglycan-based cell wall"/>
    <property type="evidence" value="ECO:0007669"/>
    <property type="project" value="InterPro"/>
</dbReference>
<dbReference type="GO" id="GO:0005886">
    <property type="term" value="C:plasma membrane"/>
    <property type="evidence" value="ECO:0007669"/>
    <property type="project" value="UniProtKB-SubCell"/>
</dbReference>
<dbReference type="GO" id="GO:0016763">
    <property type="term" value="F:pentosyltransferase activity"/>
    <property type="evidence" value="ECO:0007669"/>
    <property type="project" value="InterPro"/>
</dbReference>
<dbReference type="GO" id="GO:0008955">
    <property type="term" value="F:peptidoglycan glycosyltransferase activity"/>
    <property type="evidence" value="ECO:0007669"/>
    <property type="project" value="UniProtKB-UniRule"/>
</dbReference>
<dbReference type="GO" id="GO:0071555">
    <property type="term" value="P:cell wall organization"/>
    <property type="evidence" value="ECO:0007669"/>
    <property type="project" value="UniProtKB-KW"/>
</dbReference>
<dbReference type="GO" id="GO:0009252">
    <property type="term" value="P:peptidoglycan biosynthetic process"/>
    <property type="evidence" value="ECO:0007669"/>
    <property type="project" value="UniProtKB-UniRule"/>
</dbReference>
<dbReference type="GO" id="GO:0008360">
    <property type="term" value="P:regulation of cell shape"/>
    <property type="evidence" value="ECO:0007669"/>
    <property type="project" value="UniProtKB-KW"/>
</dbReference>
<dbReference type="Gene3D" id="1.10.3810.10">
    <property type="entry name" value="Biosynthetic peptidoglycan transglycosylase-like"/>
    <property type="match status" value="1"/>
</dbReference>
<dbReference type="HAMAP" id="MF_00766">
    <property type="entry name" value="PGT_MtgA"/>
    <property type="match status" value="1"/>
</dbReference>
<dbReference type="InterPro" id="IPR001264">
    <property type="entry name" value="Glyco_trans_51"/>
</dbReference>
<dbReference type="InterPro" id="IPR023346">
    <property type="entry name" value="Lysozyme-like_dom_sf"/>
</dbReference>
<dbReference type="InterPro" id="IPR036950">
    <property type="entry name" value="PBP_transglycosylase"/>
</dbReference>
<dbReference type="InterPro" id="IPR011812">
    <property type="entry name" value="Pep_trsgly"/>
</dbReference>
<dbReference type="NCBIfam" id="TIGR02070">
    <property type="entry name" value="mono_pep_trsgly"/>
    <property type="match status" value="1"/>
</dbReference>
<dbReference type="PANTHER" id="PTHR30400:SF0">
    <property type="entry name" value="BIOSYNTHETIC PEPTIDOGLYCAN TRANSGLYCOSYLASE"/>
    <property type="match status" value="1"/>
</dbReference>
<dbReference type="PANTHER" id="PTHR30400">
    <property type="entry name" value="MONOFUNCTIONAL BIOSYNTHETIC PEPTIDOGLYCAN TRANSGLYCOSYLASE"/>
    <property type="match status" value="1"/>
</dbReference>
<dbReference type="Pfam" id="PF00912">
    <property type="entry name" value="Transgly"/>
    <property type="match status" value="1"/>
</dbReference>
<dbReference type="SUPFAM" id="SSF53955">
    <property type="entry name" value="Lysozyme-like"/>
    <property type="match status" value="1"/>
</dbReference>
<proteinExistence type="inferred from homology"/>
<evidence type="ECO:0000255" key="1">
    <source>
        <dbReference type="HAMAP-Rule" id="MF_00766"/>
    </source>
</evidence>